<organism>
    <name type="scientific">Emiliania huxleyi</name>
    <name type="common">Coccolithophore</name>
    <name type="synonym">Pontosphaera huxleyi</name>
    <dbReference type="NCBI Taxonomy" id="2903"/>
    <lineage>
        <taxon>Eukaryota</taxon>
        <taxon>Haptista</taxon>
        <taxon>Haptophyta</taxon>
        <taxon>Prymnesiophyceae</taxon>
        <taxon>Isochrysidales</taxon>
        <taxon>Noelaerhabdaceae</taxon>
        <taxon>Emiliania</taxon>
    </lineage>
</organism>
<keyword id="KW-0066">ATP synthesis</keyword>
<keyword id="KW-0138">CF(0)</keyword>
<keyword id="KW-0150">Chloroplast</keyword>
<keyword id="KW-0375">Hydrogen ion transport</keyword>
<keyword id="KW-0406">Ion transport</keyword>
<keyword id="KW-0472">Membrane</keyword>
<keyword id="KW-0934">Plastid</keyword>
<keyword id="KW-0793">Thylakoid</keyword>
<keyword id="KW-0812">Transmembrane</keyword>
<keyword id="KW-1133">Transmembrane helix</keyword>
<keyword id="KW-0813">Transport</keyword>
<reference key="1">
    <citation type="journal article" date="2005" name="DNA Res.">
        <title>The complete plastid genome sequence of the haptophyte Emiliania huxleyi: a comparison to other plastid genomes.</title>
        <authorList>
            <person name="Sanchez-Puerta M.V."/>
            <person name="Bachvaroff T.R."/>
            <person name="Delwiche C.F."/>
        </authorList>
    </citation>
    <scope>NUCLEOTIDE SEQUENCE [LARGE SCALE GENOMIC DNA]</scope>
    <source>
        <strain>CCMP373 / CSIRO-CS-57 / BT6</strain>
    </source>
</reference>
<protein>
    <recommendedName>
        <fullName evidence="1">ATP synthase subunit b, chloroplastic</fullName>
    </recommendedName>
    <alternativeName>
        <fullName evidence="1">ATP synthase F(0) sector subunit b</fullName>
    </alternativeName>
    <alternativeName>
        <fullName evidence="1">ATPase subunit I</fullName>
    </alternativeName>
</protein>
<geneLocation type="chloroplast"/>
<proteinExistence type="inferred from homology"/>
<feature type="chain" id="PRO_0000368988" description="ATP synthase subunit b, chloroplastic">
    <location>
        <begin position="1"/>
        <end position="179"/>
    </location>
</feature>
<feature type="transmembrane region" description="Helical" evidence="1">
    <location>
        <begin position="35"/>
        <end position="51"/>
    </location>
</feature>
<accession>Q4G399</accession>
<sequence length="179" mass="19503">MHLYTQTLNTVTGLLANEGSFGLNLDIFEANLINIVILGGGIFKLGSTALSESLAERQQKIVGAIQESEERLEQAVTKLTESEKQLAQAQLVITSLKEEAEATAKQVKSGILTDGKAEIERLTASAKGQIGTIEKKIRKEISEYVVTLALQRVTLQLEGKLDVNLQQQIIDKNISKLEG</sequence>
<evidence type="ECO:0000255" key="1">
    <source>
        <dbReference type="HAMAP-Rule" id="MF_01398"/>
    </source>
</evidence>
<gene>
    <name evidence="1" type="primary">atpF</name>
</gene>
<dbReference type="EMBL" id="AY741371">
    <property type="protein sequence ID" value="AAX13867.1"/>
    <property type="molecule type" value="Genomic_DNA"/>
</dbReference>
<dbReference type="RefSeq" id="YP_277368.1">
    <property type="nucleotide sequence ID" value="NC_007288.1"/>
</dbReference>
<dbReference type="SMR" id="Q4G399"/>
<dbReference type="STRING" id="2903.Q4G399"/>
<dbReference type="GeneID" id="3562444"/>
<dbReference type="GO" id="GO:0009535">
    <property type="term" value="C:chloroplast thylakoid membrane"/>
    <property type="evidence" value="ECO:0007669"/>
    <property type="project" value="UniProtKB-SubCell"/>
</dbReference>
<dbReference type="GO" id="GO:0045259">
    <property type="term" value="C:proton-transporting ATP synthase complex"/>
    <property type="evidence" value="ECO:0007669"/>
    <property type="project" value="UniProtKB-KW"/>
</dbReference>
<dbReference type="GO" id="GO:0046933">
    <property type="term" value="F:proton-transporting ATP synthase activity, rotational mechanism"/>
    <property type="evidence" value="ECO:0007669"/>
    <property type="project" value="UniProtKB-UniRule"/>
</dbReference>
<dbReference type="CDD" id="cd06503">
    <property type="entry name" value="ATP-synt_Fo_b"/>
    <property type="match status" value="1"/>
</dbReference>
<dbReference type="HAMAP" id="MF_01398">
    <property type="entry name" value="ATP_synth_b_bprime"/>
    <property type="match status" value="1"/>
</dbReference>
<dbReference type="InterPro" id="IPR002146">
    <property type="entry name" value="ATP_synth_b/b'su_bac/chlpt"/>
</dbReference>
<dbReference type="PANTHER" id="PTHR34264">
    <property type="entry name" value="ATP SYNTHASE SUBUNIT B, CHLOROPLASTIC"/>
    <property type="match status" value="1"/>
</dbReference>
<dbReference type="PANTHER" id="PTHR34264:SF3">
    <property type="entry name" value="ATP SYNTHASE SUBUNIT B, CHLOROPLASTIC"/>
    <property type="match status" value="1"/>
</dbReference>
<dbReference type="Pfam" id="PF00430">
    <property type="entry name" value="ATP-synt_B"/>
    <property type="match status" value="1"/>
</dbReference>
<name>ATPF_EMIHU</name>
<comment type="function">
    <text evidence="1">F(1)F(0) ATP synthase produces ATP from ADP in the presence of a proton or sodium gradient. F-type ATPases consist of two structural domains, F(1) containing the extramembraneous catalytic core and F(0) containing the membrane proton channel, linked together by a central stalk and a peripheral stalk. During catalysis, ATP synthesis in the catalytic domain of F(1) is coupled via a rotary mechanism of the central stalk subunits to proton translocation.</text>
</comment>
<comment type="function">
    <text evidence="1">Component of the F(0) channel, it forms part of the peripheral stalk, linking F(1) to F(0).</text>
</comment>
<comment type="subunit">
    <text evidence="1">F-type ATPases have 2 components, F(1) - the catalytic core - and F(0) - the membrane proton channel. F(1) has five subunits: alpha(3), beta(3), gamma(1), delta(1), epsilon(1). F(0) has four main subunits: a(1), b(1), b'(1) and c(10-14). The alpha and beta chains form an alternating ring which encloses part of the gamma chain. F(1) is attached to F(0) by a central stalk formed by the gamma and epsilon chains, while a peripheral stalk is formed by the delta, b and b' chains.</text>
</comment>
<comment type="subcellular location">
    <subcellularLocation>
        <location evidence="1">Plastid</location>
        <location evidence="1">Chloroplast thylakoid membrane</location>
        <topology evidence="1">Single-pass membrane protein</topology>
    </subcellularLocation>
</comment>
<comment type="miscellaneous">
    <text>In plastids the F-type ATPase is also known as CF(1)CF(0).</text>
</comment>
<comment type="similarity">
    <text evidence="1">Belongs to the ATPase B chain family.</text>
</comment>